<gene>
    <name type="ordered locus">At5g13200</name>
    <name type="ORF">T19L5.4</name>
    <name type="ORF">T31B5_20</name>
</gene>
<proteinExistence type="evidence at protein level"/>
<name>GEML5_ARATH</name>
<evidence type="ECO:0000256" key="1">
    <source>
        <dbReference type="SAM" id="MobiDB-lite"/>
    </source>
</evidence>
<evidence type="ECO:0000305" key="2"/>
<protein>
    <recommendedName>
        <fullName>GEM-like protein 5</fullName>
    </recommendedName>
</protein>
<dbReference type="EMBL" id="AL163491">
    <property type="protein sequence ID" value="CAB86627.1"/>
    <property type="molecule type" value="Genomic_DNA"/>
</dbReference>
<dbReference type="EMBL" id="AL391711">
    <property type="status" value="NOT_ANNOTATED_CDS"/>
    <property type="molecule type" value="Genomic_DNA"/>
</dbReference>
<dbReference type="EMBL" id="CP002688">
    <property type="protein sequence ID" value="AED91863.1"/>
    <property type="molecule type" value="Genomic_DNA"/>
</dbReference>
<dbReference type="EMBL" id="BT010714">
    <property type="protein sequence ID" value="AAR20771.1"/>
    <property type="molecule type" value="mRNA"/>
</dbReference>
<dbReference type="EMBL" id="BT012428">
    <property type="protein sequence ID" value="AAS92344.1"/>
    <property type="molecule type" value="mRNA"/>
</dbReference>
<dbReference type="EMBL" id="AK229276">
    <property type="protein sequence ID" value="BAF01140.1"/>
    <property type="molecule type" value="mRNA"/>
</dbReference>
<dbReference type="PIR" id="T48567">
    <property type="entry name" value="T48567"/>
</dbReference>
<dbReference type="RefSeq" id="NP_196824.1">
    <property type="nucleotide sequence ID" value="NM_121323.4"/>
</dbReference>
<dbReference type="SMR" id="Q9LYV6"/>
<dbReference type="FunCoup" id="Q9LYV6">
    <property type="interactions" value="108"/>
</dbReference>
<dbReference type="STRING" id="3702.Q9LYV6"/>
<dbReference type="iPTMnet" id="Q9LYV6"/>
<dbReference type="PaxDb" id="3702-AT5G13200.1"/>
<dbReference type="ProteomicsDB" id="224773"/>
<dbReference type="DNASU" id="831159"/>
<dbReference type="EnsemblPlants" id="AT5G13200.1">
    <property type="protein sequence ID" value="AT5G13200.1"/>
    <property type="gene ID" value="AT5G13200"/>
</dbReference>
<dbReference type="GeneID" id="831159"/>
<dbReference type="Gramene" id="AT5G13200.1">
    <property type="protein sequence ID" value="AT5G13200.1"/>
    <property type="gene ID" value="AT5G13200"/>
</dbReference>
<dbReference type="KEGG" id="ath:AT5G13200"/>
<dbReference type="Araport" id="AT5G13200"/>
<dbReference type="TAIR" id="AT5G13200">
    <property type="gene designation" value="GER5"/>
</dbReference>
<dbReference type="eggNOG" id="ENOG502QUDB">
    <property type="taxonomic scope" value="Eukaryota"/>
</dbReference>
<dbReference type="HOGENOM" id="CLU_063785_1_1_1"/>
<dbReference type="InParanoid" id="Q9LYV6"/>
<dbReference type="OMA" id="TAWGKAN"/>
<dbReference type="OrthoDB" id="732558at2759"/>
<dbReference type="PhylomeDB" id="Q9LYV6"/>
<dbReference type="PRO" id="PR:Q9LYV6"/>
<dbReference type="Proteomes" id="UP000006548">
    <property type="component" value="Chromosome 5"/>
</dbReference>
<dbReference type="ExpressionAtlas" id="Q9LYV6">
    <property type="expression patterns" value="baseline and differential"/>
</dbReference>
<dbReference type="GO" id="GO:0009536">
    <property type="term" value="C:plastid"/>
    <property type="evidence" value="ECO:0007005"/>
    <property type="project" value="TAIR"/>
</dbReference>
<dbReference type="GO" id="GO:0009793">
    <property type="term" value="P:embryo development ending in seed dormancy"/>
    <property type="evidence" value="ECO:0000315"/>
    <property type="project" value="TAIR"/>
</dbReference>
<dbReference type="GO" id="GO:0098755">
    <property type="term" value="P:maintenance of seed dormancy by absisic acid"/>
    <property type="evidence" value="ECO:0000315"/>
    <property type="project" value="TAIR"/>
</dbReference>
<dbReference type="GO" id="GO:0010029">
    <property type="term" value="P:regulation of seed germination"/>
    <property type="evidence" value="ECO:0000315"/>
    <property type="project" value="TAIR"/>
</dbReference>
<dbReference type="GO" id="GO:0009845">
    <property type="term" value="P:seed germination"/>
    <property type="evidence" value="ECO:0000315"/>
    <property type="project" value="TAIR"/>
</dbReference>
<dbReference type="CDD" id="cd13222">
    <property type="entry name" value="PH-GRAM_GEM"/>
    <property type="match status" value="1"/>
</dbReference>
<dbReference type="Gene3D" id="2.30.29.30">
    <property type="entry name" value="Pleckstrin-homology domain (PH domain)/Phosphotyrosine-binding domain (PTB)"/>
    <property type="match status" value="1"/>
</dbReference>
<dbReference type="InterPro" id="IPR037848">
    <property type="entry name" value="GEM-like"/>
</dbReference>
<dbReference type="InterPro" id="IPR004182">
    <property type="entry name" value="GRAM"/>
</dbReference>
<dbReference type="InterPro" id="IPR011993">
    <property type="entry name" value="PH-like_dom_sf"/>
</dbReference>
<dbReference type="PANTHER" id="PTHR31969">
    <property type="entry name" value="GEM-LIKE PROTEIN 2"/>
    <property type="match status" value="1"/>
</dbReference>
<dbReference type="Pfam" id="PF02893">
    <property type="entry name" value="GRAM"/>
    <property type="match status" value="1"/>
</dbReference>
<dbReference type="SMART" id="SM00568">
    <property type="entry name" value="GRAM"/>
    <property type="match status" value="1"/>
</dbReference>
<reference key="1">
    <citation type="journal article" date="2000" name="Nature">
        <title>Sequence and analysis of chromosome 5 of the plant Arabidopsis thaliana.</title>
        <authorList>
            <person name="Tabata S."/>
            <person name="Kaneko T."/>
            <person name="Nakamura Y."/>
            <person name="Kotani H."/>
            <person name="Kato T."/>
            <person name="Asamizu E."/>
            <person name="Miyajima N."/>
            <person name="Sasamoto S."/>
            <person name="Kimura T."/>
            <person name="Hosouchi T."/>
            <person name="Kawashima K."/>
            <person name="Kohara M."/>
            <person name="Matsumoto M."/>
            <person name="Matsuno A."/>
            <person name="Muraki A."/>
            <person name="Nakayama S."/>
            <person name="Nakazaki N."/>
            <person name="Naruo K."/>
            <person name="Okumura S."/>
            <person name="Shinpo S."/>
            <person name="Takeuchi C."/>
            <person name="Wada T."/>
            <person name="Watanabe A."/>
            <person name="Yamada M."/>
            <person name="Yasuda M."/>
            <person name="Sato S."/>
            <person name="de la Bastide M."/>
            <person name="Huang E."/>
            <person name="Spiegel L."/>
            <person name="Gnoj L."/>
            <person name="O'Shaughnessy A."/>
            <person name="Preston R."/>
            <person name="Habermann K."/>
            <person name="Murray J."/>
            <person name="Johnson D."/>
            <person name="Rohlfing T."/>
            <person name="Nelson J."/>
            <person name="Stoneking T."/>
            <person name="Pepin K."/>
            <person name="Spieth J."/>
            <person name="Sekhon M."/>
            <person name="Armstrong J."/>
            <person name="Becker M."/>
            <person name="Belter E."/>
            <person name="Cordum H."/>
            <person name="Cordes M."/>
            <person name="Courtney L."/>
            <person name="Courtney W."/>
            <person name="Dante M."/>
            <person name="Du H."/>
            <person name="Edwards J."/>
            <person name="Fryman J."/>
            <person name="Haakensen B."/>
            <person name="Lamar E."/>
            <person name="Latreille P."/>
            <person name="Leonard S."/>
            <person name="Meyer R."/>
            <person name="Mulvaney E."/>
            <person name="Ozersky P."/>
            <person name="Riley A."/>
            <person name="Strowmatt C."/>
            <person name="Wagner-McPherson C."/>
            <person name="Wollam A."/>
            <person name="Yoakum M."/>
            <person name="Bell M."/>
            <person name="Dedhia N."/>
            <person name="Parnell L."/>
            <person name="Shah R."/>
            <person name="Rodriguez M."/>
            <person name="Hoon See L."/>
            <person name="Vil D."/>
            <person name="Baker J."/>
            <person name="Kirchoff K."/>
            <person name="Toth K."/>
            <person name="King L."/>
            <person name="Bahret A."/>
            <person name="Miller B."/>
            <person name="Marra M.A."/>
            <person name="Martienssen R."/>
            <person name="McCombie W.R."/>
            <person name="Wilson R.K."/>
            <person name="Murphy G."/>
            <person name="Bancroft I."/>
            <person name="Volckaert G."/>
            <person name="Wambutt R."/>
            <person name="Duesterhoeft A."/>
            <person name="Stiekema W."/>
            <person name="Pohl T."/>
            <person name="Entian K.-D."/>
            <person name="Terryn N."/>
            <person name="Hartley N."/>
            <person name="Bent E."/>
            <person name="Johnson S."/>
            <person name="Langham S.-A."/>
            <person name="McCullagh B."/>
            <person name="Robben J."/>
            <person name="Grymonprez B."/>
            <person name="Zimmermann W."/>
            <person name="Ramsperger U."/>
            <person name="Wedler H."/>
            <person name="Balke K."/>
            <person name="Wedler E."/>
            <person name="Peters S."/>
            <person name="van Staveren M."/>
            <person name="Dirkse W."/>
            <person name="Mooijman P."/>
            <person name="Klein Lankhorst R."/>
            <person name="Weitzenegger T."/>
            <person name="Bothe G."/>
            <person name="Rose M."/>
            <person name="Hauf J."/>
            <person name="Berneiser S."/>
            <person name="Hempel S."/>
            <person name="Feldpausch M."/>
            <person name="Lamberth S."/>
            <person name="Villarroel R."/>
            <person name="Gielen J."/>
            <person name="Ardiles W."/>
            <person name="Bents O."/>
            <person name="Lemcke K."/>
            <person name="Kolesov G."/>
            <person name="Mayer K.F.X."/>
            <person name="Rudd S."/>
            <person name="Schoof H."/>
            <person name="Schueller C."/>
            <person name="Zaccaria P."/>
            <person name="Mewes H.-W."/>
            <person name="Bevan M."/>
            <person name="Fransz P.F."/>
        </authorList>
    </citation>
    <scope>NUCLEOTIDE SEQUENCE [LARGE SCALE GENOMIC DNA]</scope>
    <source>
        <strain>cv. Columbia</strain>
    </source>
</reference>
<reference key="2">
    <citation type="journal article" date="2017" name="Plant J.">
        <title>Araport11: a complete reannotation of the Arabidopsis thaliana reference genome.</title>
        <authorList>
            <person name="Cheng C.Y."/>
            <person name="Krishnakumar V."/>
            <person name="Chan A.P."/>
            <person name="Thibaud-Nissen F."/>
            <person name="Schobel S."/>
            <person name="Town C.D."/>
        </authorList>
    </citation>
    <scope>GENOME REANNOTATION</scope>
    <source>
        <strain>cv. Columbia</strain>
    </source>
</reference>
<reference key="3">
    <citation type="submission" date="2004-04" db="EMBL/GenBank/DDBJ databases">
        <title>Arabidopsis ORF clones.</title>
        <authorList>
            <person name="Shinn P."/>
            <person name="Chen H."/>
            <person name="Cheuk R.F."/>
            <person name="Kim C.J."/>
            <person name="Ecker J.R."/>
        </authorList>
    </citation>
    <scope>NUCLEOTIDE SEQUENCE [LARGE SCALE MRNA]</scope>
    <source>
        <strain>cv. Columbia</strain>
    </source>
</reference>
<reference key="4">
    <citation type="submission" date="2006-07" db="EMBL/GenBank/DDBJ databases">
        <title>Large-scale analysis of RIKEN Arabidopsis full-length (RAFL) cDNAs.</title>
        <authorList>
            <person name="Totoki Y."/>
            <person name="Seki M."/>
            <person name="Ishida J."/>
            <person name="Nakajima M."/>
            <person name="Enju A."/>
            <person name="Kamiya A."/>
            <person name="Narusaka M."/>
            <person name="Shin-i T."/>
            <person name="Nakagawa M."/>
            <person name="Sakamoto N."/>
            <person name="Oishi K."/>
            <person name="Kohara Y."/>
            <person name="Kobayashi M."/>
            <person name="Toyoda A."/>
            <person name="Sakaki Y."/>
            <person name="Sakurai T."/>
            <person name="Iida K."/>
            <person name="Akiyama K."/>
            <person name="Satou M."/>
            <person name="Toyoda T."/>
            <person name="Konagaya A."/>
            <person name="Carninci P."/>
            <person name="Kawai J."/>
            <person name="Hayashizaki Y."/>
            <person name="Shinozaki K."/>
        </authorList>
    </citation>
    <scope>NUCLEOTIDE SEQUENCE [LARGE SCALE MRNA]</scope>
    <source>
        <strain>cv. Columbia</strain>
    </source>
</reference>
<reference key="5">
    <citation type="journal article" date="2009" name="Plant Physiol.">
        <title>Large-scale Arabidopsis phosphoproteome profiling reveals novel chloroplast kinase substrates and phosphorylation networks.</title>
        <authorList>
            <person name="Reiland S."/>
            <person name="Messerli G."/>
            <person name="Baerenfaller K."/>
            <person name="Gerrits B."/>
            <person name="Endler A."/>
            <person name="Grossmann J."/>
            <person name="Gruissem W."/>
            <person name="Baginsky S."/>
        </authorList>
    </citation>
    <scope>IDENTIFICATION BY MASS SPECTROMETRY [LARGE SCALE ANALYSIS]</scope>
</reference>
<feature type="chain" id="PRO_0000311669" description="GEM-like protein 5">
    <location>
        <begin position="1"/>
        <end position="272"/>
    </location>
</feature>
<feature type="domain" description="GRAM">
    <location>
        <begin position="143"/>
        <end position="221"/>
    </location>
</feature>
<feature type="region of interest" description="Disordered" evidence="1">
    <location>
        <begin position="1"/>
        <end position="42"/>
    </location>
</feature>
<feature type="compositionally biased region" description="Basic and acidic residues" evidence="1">
    <location>
        <begin position="16"/>
        <end position="27"/>
    </location>
</feature>
<comment type="similarity">
    <text evidence="2">Belongs to the GEM family.</text>
</comment>
<organism>
    <name type="scientific">Arabidopsis thaliana</name>
    <name type="common">Mouse-ear cress</name>
    <dbReference type="NCBI Taxonomy" id="3702"/>
    <lineage>
        <taxon>Eukaryota</taxon>
        <taxon>Viridiplantae</taxon>
        <taxon>Streptophyta</taxon>
        <taxon>Embryophyta</taxon>
        <taxon>Tracheophyta</taxon>
        <taxon>Spermatophyta</taxon>
        <taxon>Magnoliopsida</taxon>
        <taxon>eudicotyledons</taxon>
        <taxon>Gunneridae</taxon>
        <taxon>Pentapetalae</taxon>
        <taxon>rosids</taxon>
        <taxon>malvids</taxon>
        <taxon>Brassicales</taxon>
        <taxon>Brassicaceae</taxon>
        <taxon>Camelineae</taxon>
        <taxon>Arabidopsis</taxon>
    </lineage>
</organism>
<accession>Q9LYV6</accession>
<sequence length="272" mass="30071">MTGSQEDQPKIIIDQEQPKTLETEHQPEPSSSSPDQKKWGTHVMGAPAAPVAHPDNQQAAAWVAGDNQQTQYQPYVIYSPVEHPTTNNPLEPVIGMFHTWSRKAETVARNLWHNLKTGPSMSETAWGKVNLTAKAITKGGFESLFRQIFGTEPNETLKKTFACYLSTTTGPVAGTVYLSNARVAFCSDRPLYFTAPSGQESWSYYRVVVPLANVATVNPVVVKETPPEKYIQLTTVDGHDFWFMGFVNYEKATHHLLTSVSDFQTAHGSVSG</sequence>
<keyword id="KW-1185">Reference proteome</keyword>